<proteinExistence type="inferred from homology"/>
<accession>A7GXK2</accession>
<dbReference type="EC" id="1.5.1.5" evidence="1"/>
<dbReference type="EC" id="3.5.4.9" evidence="1"/>
<dbReference type="EMBL" id="CP000767">
    <property type="protein sequence ID" value="EAT99468.1"/>
    <property type="molecule type" value="Genomic_DNA"/>
</dbReference>
<dbReference type="RefSeq" id="WP_011992078.1">
    <property type="nucleotide sequence ID" value="NC_009715.2"/>
</dbReference>
<dbReference type="SMR" id="A7GXK2"/>
<dbReference type="STRING" id="360105.CCV52592_0799"/>
<dbReference type="KEGG" id="ccv:CCV52592_0799"/>
<dbReference type="HOGENOM" id="CLU_034045_2_1_7"/>
<dbReference type="OrthoDB" id="9803580at2"/>
<dbReference type="UniPathway" id="UPA00193"/>
<dbReference type="Proteomes" id="UP000006380">
    <property type="component" value="Chromosome"/>
</dbReference>
<dbReference type="GO" id="GO:0005829">
    <property type="term" value="C:cytosol"/>
    <property type="evidence" value="ECO:0007669"/>
    <property type="project" value="TreeGrafter"/>
</dbReference>
<dbReference type="GO" id="GO:0004477">
    <property type="term" value="F:methenyltetrahydrofolate cyclohydrolase activity"/>
    <property type="evidence" value="ECO:0007669"/>
    <property type="project" value="UniProtKB-UniRule"/>
</dbReference>
<dbReference type="GO" id="GO:0004488">
    <property type="term" value="F:methylenetetrahydrofolate dehydrogenase (NADP+) activity"/>
    <property type="evidence" value="ECO:0007669"/>
    <property type="project" value="UniProtKB-UniRule"/>
</dbReference>
<dbReference type="GO" id="GO:0000105">
    <property type="term" value="P:L-histidine biosynthetic process"/>
    <property type="evidence" value="ECO:0007669"/>
    <property type="project" value="UniProtKB-KW"/>
</dbReference>
<dbReference type="GO" id="GO:0009086">
    <property type="term" value="P:methionine biosynthetic process"/>
    <property type="evidence" value="ECO:0007669"/>
    <property type="project" value="UniProtKB-KW"/>
</dbReference>
<dbReference type="GO" id="GO:0006164">
    <property type="term" value="P:purine nucleotide biosynthetic process"/>
    <property type="evidence" value="ECO:0007669"/>
    <property type="project" value="UniProtKB-KW"/>
</dbReference>
<dbReference type="GO" id="GO:0035999">
    <property type="term" value="P:tetrahydrofolate interconversion"/>
    <property type="evidence" value="ECO:0007669"/>
    <property type="project" value="UniProtKB-UniRule"/>
</dbReference>
<dbReference type="CDD" id="cd01080">
    <property type="entry name" value="NAD_bind_m-THF_DH_Cyclohyd"/>
    <property type="match status" value="1"/>
</dbReference>
<dbReference type="FunFam" id="3.40.50.720:FF:000094">
    <property type="entry name" value="Bifunctional protein FolD"/>
    <property type="match status" value="1"/>
</dbReference>
<dbReference type="FunFam" id="3.40.50.10860:FF:000005">
    <property type="entry name" value="C-1-tetrahydrofolate synthase, cytoplasmic, putative"/>
    <property type="match status" value="1"/>
</dbReference>
<dbReference type="Gene3D" id="3.40.50.10860">
    <property type="entry name" value="Leucine Dehydrogenase, chain A, domain 1"/>
    <property type="match status" value="1"/>
</dbReference>
<dbReference type="Gene3D" id="3.40.50.720">
    <property type="entry name" value="NAD(P)-binding Rossmann-like Domain"/>
    <property type="match status" value="1"/>
</dbReference>
<dbReference type="HAMAP" id="MF_01576">
    <property type="entry name" value="THF_DHG_CYH"/>
    <property type="match status" value="1"/>
</dbReference>
<dbReference type="InterPro" id="IPR046346">
    <property type="entry name" value="Aminoacid_DH-like_N_sf"/>
</dbReference>
<dbReference type="InterPro" id="IPR036291">
    <property type="entry name" value="NAD(P)-bd_dom_sf"/>
</dbReference>
<dbReference type="InterPro" id="IPR000672">
    <property type="entry name" value="THF_DH/CycHdrlase"/>
</dbReference>
<dbReference type="InterPro" id="IPR020630">
    <property type="entry name" value="THF_DH/CycHdrlase_cat_dom"/>
</dbReference>
<dbReference type="InterPro" id="IPR020867">
    <property type="entry name" value="THF_DH/CycHdrlase_CS"/>
</dbReference>
<dbReference type="InterPro" id="IPR020631">
    <property type="entry name" value="THF_DH/CycHdrlase_NAD-bd_dom"/>
</dbReference>
<dbReference type="NCBIfam" id="NF008058">
    <property type="entry name" value="PRK10792.1"/>
    <property type="match status" value="1"/>
</dbReference>
<dbReference type="NCBIfam" id="NF010783">
    <property type="entry name" value="PRK14186.1"/>
    <property type="match status" value="1"/>
</dbReference>
<dbReference type="NCBIfam" id="NF010787">
    <property type="entry name" value="PRK14191.1"/>
    <property type="match status" value="1"/>
</dbReference>
<dbReference type="PANTHER" id="PTHR48099:SF5">
    <property type="entry name" value="C-1-TETRAHYDROFOLATE SYNTHASE, CYTOPLASMIC"/>
    <property type="match status" value="1"/>
</dbReference>
<dbReference type="PANTHER" id="PTHR48099">
    <property type="entry name" value="C-1-TETRAHYDROFOLATE SYNTHASE, CYTOPLASMIC-RELATED"/>
    <property type="match status" value="1"/>
</dbReference>
<dbReference type="Pfam" id="PF00763">
    <property type="entry name" value="THF_DHG_CYH"/>
    <property type="match status" value="1"/>
</dbReference>
<dbReference type="Pfam" id="PF02882">
    <property type="entry name" value="THF_DHG_CYH_C"/>
    <property type="match status" value="1"/>
</dbReference>
<dbReference type="PRINTS" id="PR00085">
    <property type="entry name" value="THFDHDRGNASE"/>
</dbReference>
<dbReference type="SUPFAM" id="SSF53223">
    <property type="entry name" value="Aminoacid dehydrogenase-like, N-terminal domain"/>
    <property type="match status" value="1"/>
</dbReference>
<dbReference type="SUPFAM" id="SSF51735">
    <property type="entry name" value="NAD(P)-binding Rossmann-fold domains"/>
    <property type="match status" value="1"/>
</dbReference>
<dbReference type="PROSITE" id="PS00766">
    <property type="entry name" value="THF_DHG_CYH_1"/>
    <property type="match status" value="1"/>
</dbReference>
<dbReference type="PROSITE" id="PS00767">
    <property type="entry name" value="THF_DHG_CYH_2"/>
    <property type="match status" value="1"/>
</dbReference>
<name>FOLD_CAMC5</name>
<comment type="function">
    <text evidence="1">Catalyzes the oxidation of 5,10-methylenetetrahydrofolate to 5,10-methenyltetrahydrofolate and then the hydrolysis of 5,10-methenyltetrahydrofolate to 10-formyltetrahydrofolate.</text>
</comment>
<comment type="catalytic activity">
    <reaction evidence="1">
        <text>(6R)-5,10-methylene-5,6,7,8-tetrahydrofolate + NADP(+) = (6R)-5,10-methenyltetrahydrofolate + NADPH</text>
        <dbReference type="Rhea" id="RHEA:22812"/>
        <dbReference type="ChEBI" id="CHEBI:15636"/>
        <dbReference type="ChEBI" id="CHEBI:57455"/>
        <dbReference type="ChEBI" id="CHEBI:57783"/>
        <dbReference type="ChEBI" id="CHEBI:58349"/>
        <dbReference type="EC" id="1.5.1.5"/>
    </reaction>
</comment>
<comment type="catalytic activity">
    <reaction evidence="1">
        <text>(6R)-5,10-methenyltetrahydrofolate + H2O = (6R)-10-formyltetrahydrofolate + H(+)</text>
        <dbReference type="Rhea" id="RHEA:23700"/>
        <dbReference type="ChEBI" id="CHEBI:15377"/>
        <dbReference type="ChEBI" id="CHEBI:15378"/>
        <dbReference type="ChEBI" id="CHEBI:57455"/>
        <dbReference type="ChEBI" id="CHEBI:195366"/>
        <dbReference type="EC" id="3.5.4.9"/>
    </reaction>
</comment>
<comment type="pathway">
    <text evidence="1">One-carbon metabolism; tetrahydrofolate interconversion.</text>
</comment>
<comment type="subunit">
    <text evidence="1">Homodimer.</text>
</comment>
<comment type="similarity">
    <text evidence="1">Belongs to the tetrahydrofolate dehydrogenase/cyclohydrolase family.</text>
</comment>
<organism>
    <name type="scientific">Campylobacter curvus (strain 525.92)</name>
    <dbReference type="NCBI Taxonomy" id="360105"/>
    <lineage>
        <taxon>Bacteria</taxon>
        <taxon>Pseudomonadati</taxon>
        <taxon>Campylobacterota</taxon>
        <taxon>Epsilonproteobacteria</taxon>
        <taxon>Campylobacterales</taxon>
        <taxon>Campylobacteraceae</taxon>
        <taxon>Campylobacter</taxon>
    </lineage>
</organism>
<reference key="1">
    <citation type="submission" date="2007-07" db="EMBL/GenBank/DDBJ databases">
        <title>Genome sequence of Campylobacter curvus 525.92 isolated from human feces.</title>
        <authorList>
            <person name="Fouts D.E."/>
            <person name="Mongodin E.F."/>
            <person name="Puiu D."/>
            <person name="Sebastian Y."/>
            <person name="Miller W.G."/>
            <person name="Mandrell R.E."/>
            <person name="Lastovica A.J."/>
            <person name="Nelson K.E."/>
        </authorList>
    </citation>
    <scope>NUCLEOTIDE SEQUENCE [LARGE SCALE GENOMIC DNA]</scope>
    <source>
        <strain>525.92</strain>
    </source>
</reference>
<sequence>MKILDGKATSAKVKAEVKERASALKNAGIEPALAVILVGSDKASQTYVAAKQKACEASGIRSVMHKLPQTTSQNELLALINVLNLDDSIDGILVQLPLPAHIDTTSVLETIWPQKDVDGFHAENVGKLVSGLDGFVPCTPLGIMRILKEYGIDVAGLNAVVIGRSNIVGKPMASLLLNASATVTITHSKTRNLKQICSAADLIVAAIGKPNFVTADMVKEGAIVIDVGINRLDDGRLVGDVDFEAVAPKSSFITPVPGGVGPMTIAMLLSNTIRSAQNRAKNLGIVKE</sequence>
<gene>
    <name evidence="1" type="primary">folD</name>
    <name type="ordered locus">Ccur92_06400</name>
    <name type="ORF">CCV52592_0799</name>
</gene>
<feature type="chain" id="PRO_1000069234" description="Bifunctional protein FolD">
    <location>
        <begin position="1"/>
        <end position="288"/>
    </location>
</feature>
<feature type="binding site" evidence="1">
    <location>
        <begin position="163"/>
        <end position="165"/>
    </location>
    <ligand>
        <name>NADP(+)</name>
        <dbReference type="ChEBI" id="CHEBI:58349"/>
    </ligand>
</feature>
<feature type="binding site" evidence="1">
    <location>
        <position position="188"/>
    </location>
    <ligand>
        <name>NADP(+)</name>
        <dbReference type="ChEBI" id="CHEBI:58349"/>
    </ligand>
</feature>
<feature type="binding site" evidence="1">
    <location>
        <position position="229"/>
    </location>
    <ligand>
        <name>NADP(+)</name>
        <dbReference type="ChEBI" id="CHEBI:58349"/>
    </ligand>
</feature>
<protein>
    <recommendedName>
        <fullName evidence="1">Bifunctional protein FolD</fullName>
    </recommendedName>
    <domain>
        <recommendedName>
            <fullName evidence="1">Methylenetetrahydrofolate dehydrogenase</fullName>
            <ecNumber evidence="1">1.5.1.5</ecNumber>
        </recommendedName>
    </domain>
    <domain>
        <recommendedName>
            <fullName evidence="1">Methenyltetrahydrofolate cyclohydrolase</fullName>
            <ecNumber evidence="1">3.5.4.9</ecNumber>
        </recommendedName>
    </domain>
</protein>
<keyword id="KW-0028">Amino-acid biosynthesis</keyword>
<keyword id="KW-0368">Histidine biosynthesis</keyword>
<keyword id="KW-0378">Hydrolase</keyword>
<keyword id="KW-0486">Methionine biosynthesis</keyword>
<keyword id="KW-0511">Multifunctional enzyme</keyword>
<keyword id="KW-0521">NADP</keyword>
<keyword id="KW-0554">One-carbon metabolism</keyword>
<keyword id="KW-0560">Oxidoreductase</keyword>
<keyword id="KW-0658">Purine biosynthesis</keyword>
<keyword id="KW-1185">Reference proteome</keyword>
<evidence type="ECO:0000255" key="1">
    <source>
        <dbReference type="HAMAP-Rule" id="MF_01576"/>
    </source>
</evidence>